<accession>A5HKP3</accession>
<organism>
    <name type="scientific">Lactobacillus acidophilus</name>
    <dbReference type="NCBI Taxonomy" id="1579"/>
    <lineage>
        <taxon>Bacteria</taxon>
        <taxon>Bacillati</taxon>
        <taxon>Bacillota</taxon>
        <taxon>Bacilli</taxon>
        <taxon>Lactobacillales</taxon>
        <taxon>Lactobacillaceae</taxon>
        <taxon>Lactobacillus</taxon>
    </lineage>
</organism>
<reference key="1">
    <citation type="journal article" date="2008" name="J. Microbiol. Biotechnol.">
        <title>Molecular cloning and characterization of a bile salt hydrolase from Lactobacillus acidophilus PF01.</title>
        <authorList>
            <person name="Oh H.K."/>
            <person name="Lee J.Y."/>
            <person name="Lim S.J."/>
            <person name="Kim M.J."/>
            <person name="Kim G.B."/>
            <person name="Kim J.H."/>
            <person name="Hong S.K."/>
            <person name="Kang D.K."/>
        </authorList>
    </citation>
    <scope>NUCLEOTIDE SEQUENCE [GENOMIC DNA]</scope>
    <scope>FUNCTION</scope>
    <scope>CATALYTIC ACTIVITY</scope>
    <scope>BIOPHYSICOCHEMICAL PROPERTIES</scope>
    <source>
        <strain>PF01</strain>
    </source>
</reference>
<reference key="2">
    <citation type="journal article" date="2014" name="Pathogens">
        <title>Effect of Bile Salt Hydrolase Inhibitors on a Bile Salt Hydrolase from Lactobacillus acidophilus.</title>
        <authorList>
            <person name="Lin J."/>
            <person name="Negga R."/>
            <person name="Zeng X."/>
            <person name="Smith K."/>
        </authorList>
    </citation>
    <scope>FUNCTION</scope>
    <scope>CATALYTIC ACTIVITY</scope>
    <scope>ACTIVITY REGULATION</scope>
    <scope>BIOTECHNOLOGY</scope>
    <source>
        <strain>PF01</strain>
    </source>
</reference>
<dbReference type="EC" id="3.5.1.-" evidence="2 3"/>
<dbReference type="EC" id="3.5.1.74" evidence="2"/>
<dbReference type="EC" id="3.5.1.24" evidence="3"/>
<dbReference type="EMBL" id="EF536029">
    <property type="protein sequence ID" value="ABQ01980.1"/>
    <property type="molecule type" value="Genomic_DNA"/>
</dbReference>
<dbReference type="SMR" id="A5HKP3"/>
<dbReference type="MEROPS" id="C59.951"/>
<dbReference type="BRENDA" id="3.5.1.24">
    <property type="organism ID" value="2846"/>
</dbReference>
<dbReference type="UniPathway" id="UPA00221"/>
<dbReference type="GO" id="GO:0016787">
    <property type="term" value="F:hydrolase activity"/>
    <property type="evidence" value="ECO:0007669"/>
    <property type="project" value="UniProtKB-KW"/>
</dbReference>
<dbReference type="GO" id="GO:0006629">
    <property type="term" value="P:lipid metabolic process"/>
    <property type="evidence" value="ECO:0007669"/>
    <property type="project" value="UniProtKB-KW"/>
</dbReference>
<dbReference type="CDD" id="cd00542">
    <property type="entry name" value="Ntn_PVA"/>
    <property type="match status" value="1"/>
</dbReference>
<dbReference type="Gene3D" id="3.60.60.10">
    <property type="entry name" value="Penicillin V Acylase, Chain A"/>
    <property type="match status" value="1"/>
</dbReference>
<dbReference type="InterPro" id="IPR047711">
    <property type="entry name" value="CBAH"/>
</dbReference>
<dbReference type="InterPro" id="IPR029132">
    <property type="entry name" value="CBAH/NAAA_C"/>
</dbReference>
<dbReference type="InterPro" id="IPR029055">
    <property type="entry name" value="Ntn_hydrolases_N"/>
</dbReference>
<dbReference type="InterPro" id="IPR052193">
    <property type="entry name" value="Peptidase_C59"/>
</dbReference>
<dbReference type="NCBIfam" id="NF038245">
    <property type="entry name" value="bile_salt_hydro"/>
    <property type="match status" value="1"/>
</dbReference>
<dbReference type="PANTHER" id="PTHR35527">
    <property type="entry name" value="CHOLOYLGLYCINE HYDROLASE"/>
    <property type="match status" value="1"/>
</dbReference>
<dbReference type="PANTHER" id="PTHR35527:SF2">
    <property type="entry name" value="HYDROLASE"/>
    <property type="match status" value="1"/>
</dbReference>
<dbReference type="Pfam" id="PF02275">
    <property type="entry name" value="CBAH"/>
    <property type="match status" value="1"/>
</dbReference>
<dbReference type="SUPFAM" id="SSF56235">
    <property type="entry name" value="N-terminal nucleophile aminohydrolases (Ntn hydrolases)"/>
    <property type="match status" value="1"/>
</dbReference>
<evidence type="ECO:0000250" key="1">
    <source>
        <dbReference type="UniProtKB" id="P54965"/>
    </source>
</evidence>
<evidence type="ECO:0000269" key="2">
    <source>
    </source>
</evidence>
<evidence type="ECO:0000269" key="3">
    <source>
    </source>
</evidence>
<evidence type="ECO:0000303" key="4">
    <source>
    </source>
</evidence>
<evidence type="ECO:0000305" key="5"/>
<evidence type="ECO:0000305" key="6">
    <source>
    </source>
</evidence>
<proteinExistence type="evidence at protein level"/>
<feature type="chain" id="PRO_0000460258" description="Conjugated bile acid hydrolase">
    <location>
        <begin position="1"/>
        <end position="316"/>
    </location>
</feature>
<feature type="active site" description="Nucleophile" evidence="1">
    <location>
        <position position="2"/>
    </location>
</feature>
<feature type="binding site" evidence="1">
    <location>
        <position position="2"/>
    </location>
    <ligand>
        <name>deoxycholate</name>
        <dbReference type="ChEBI" id="CHEBI:23614"/>
    </ligand>
</feature>
<feature type="binding site" evidence="1">
    <location>
        <position position="18"/>
    </location>
    <ligand>
        <name>deoxycholate</name>
        <dbReference type="ChEBI" id="CHEBI:23614"/>
    </ligand>
</feature>
<feature type="binding site" evidence="1">
    <location>
        <position position="81"/>
    </location>
    <ligand>
        <name>taurine</name>
        <dbReference type="ChEBI" id="CHEBI:507393"/>
    </ligand>
</feature>
<protein>
    <recommendedName>
        <fullName evidence="5">Conjugated bile acid hydrolase</fullName>
        <ecNumber evidence="2 3">3.5.1.-</ecNumber>
    </recommendedName>
    <alternativeName>
        <fullName evidence="4">Bile salt hydrolase</fullName>
        <shortName evidence="4">BSH</shortName>
    </alternativeName>
    <alternativeName>
        <fullName evidence="5">Chenodeoxycholoyltaurine hydrolase</fullName>
        <ecNumber evidence="2">3.5.1.74</ecNumber>
    </alternativeName>
    <alternativeName>
        <fullName evidence="5">Choloylglycine hydrolase</fullName>
        <ecNumber evidence="3">3.5.1.24</ecNumber>
    </alternativeName>
</protein>
<name>CBH_LACAI</name>
<sequence length="316" mass="34856">MCTGLRFTDDQGNLYFGRNLDVGQDYGEGVIITPGNYPLPYKFLDNTTTKKAVIGMGIVVDGYPSYFDCYNEDGLGIAGLNFPHFAKFSDGPIDGKINLASYEIMLWVTQNFTHVSEVKEALKNVNLVNEAINTSFAVAPLHWIISDSDEAIIVEVSKQYGMKVFDDKVGVLTNSPDFNWHLTNLGNYTGLNPHDATAQSWNGQKVAPWGVGTGSLGLPGDSIPADRFVKAAYLNVNYPTAKGEKANVAKFFNILKSVAMIKGSVVNDQGKDEYTVYTACYSSGSKTYYCNFEDDFELKTYKLDDHTMNSTSLVTY</sequence>
<gene>
    <name evidence="4" type="primary">bsh</name>
</gene>
<comment type="function">
    <text evidence="2 3">Bile salt hydrolase that catalyzes the deconjugation of glycine- and taurine-linked bile salts, which occurs naturally in the intestines of animals, releasing amino acid residues and deconjugated bile salts (bile acids) (PubMed:18388461, PubMed:25526498). Can hydrolyze the amide bond in the bile salts taurocholate (TCA), taurodeoxycholate (TDCA), taurochenodeoxycholate (TCDCA), taurohyodeoxycholate (THDCA) and tauroursodeoxycholate (TUDCA) (PubMed:18388461). Oh et al. did not detect activity with the glycine-conjugated bile salts glycocholate (GCA), glycodeoxycholate (GDCA) and glycochenodeoxycholate (GCDCA) (PubMed:18388461). However, a later study shows activity toward glycocholate (GCA) (PubMed:25526498).</text>
</comment>
<comment type="catalytic activity">
    <reaction evidence="2">
        <text>cholate + taurine = taurocholate + H2O</text>
        <dbReference type="Rhea" id="RHEA:47108"/>
        <dbReference type="ChEBI" id="CHEBI:15377"/>
        <dbReference type="ChEBI" id="CHEBI:29747"/>
        <dbReference type="ChEBI" id="CHEBI:36257"/>
        <dbReference type="ChEBI" id="CHEBI:507393"/>
    </reaction>
    <physiologicalReaction direction="right-to-left" evidence="6">
        <dbReference type="Rhea" id="RHEA:47110"/>
    </physiologicalReaction>
</comment>
<comment type="catalytic activity">
    <reaction evidence="2">
        <text>taurodeoxycholate + H2O = deoxycholate + taurine</text>
        <dbReference type="Rhea" id="RHEA:47556"/>
        <dbReference type="ChEBI" id="CHEBI:15377"/>
        <dbReference type="ChEBI" id="CHEBI:23614"/>
        <dbReference type="ChEBI" id="CHEBI:36261"/>
        <dbReference type="ChEBI" id="CHEBI:507393"/>
    </reaction>
    <physiologicalReaction direction="left-to-right" evidence="6">
        <dbReference type="Rhea" id="RHEA:47557"/>
    </physiologicalReaction>
</comment>
<comment type="catalytic activity">
    <reaction evidence="2">
        <text>taurochenodeoxycholate + H2O = chenodeoxycholate + taurine</text>
        <dbReference type="Rhea" id="RHEA:16309"/>
        <dbReference type="ChEBI" id="CHEBI:9407"/>
        <dbReference type="ChEBI" id="CHEBI:15377"/>
        <dbReference type="ChEBI" id="CHEBI:36234"/>
        <dbReference type="ChEBI" id="CHEBI:507393"/>
        <dbReference type="EC" id="3.5.1.74"/>
    </reaction>
    <physiologicalReaction direction="left-to-right" evidence="6">
        <dbReference type="Rhea" id="RHEA:16310"/>
    </physiologicalReaction>
</comment>
<comment type="catalytic activity">
    <reaction evidence="3">
        <text>glycocholate + H2O = cholate + glycine</text>
        <dbReference type="Rhea" id="RHEA:19353"/>
        <dbReference type="ChEBI" id="CHEBI:15377"/>
        <dbReference type="ChEBI" id="CHEBI:29746"/>
        <dbReference type="ChEBI" id="CHEBI:29747"/>
        <dbReference type="ChEBI" id="CHEBI:57305"/>
        <dbReference type="EC" id="3.5.1.24"/>
    </reaction>
</comment>
<comment type="activity regulation">
    <text evidence="3">Glycocholate hydrolysis is inhibited by various previously identified BSH inhibitors, including KIO(3), NaHIO(3), NaIO(4), CuCl(2), menadione, riboflavin, gossypetin, and the antibiotics oxytetracycline, demeclocycline hydrochloride and methacycline hydrochloride.</text>
</comment>
<comment type="biophysicochemical properties">
    <phDependence>
        <text evidence="2">Optimum pH is 6 (PubMed:18388461). Rapidly inactivated below pH 5 and above pH 7 (PubMed:18388461).</text>
    </phDependence>
    <temperatureDependence>
        <text evidence="2">Optimum temperature is 40 degrees Celsius (PubMed:18388461). Maintains approximately 70% of its maximum activity even at 60 degrees Celsius, whereas its activity rapidly decreases below 37 degrees Celsius (PubMed:18388461).</text>
    </temperatureDependence>
</comment>
<comment type="pathway">
    <text evidence="6">Lipid metabolism; bile acid biosynthesis.</text>
</comment>
<comment type="biotechnology">
    <text evidence="3">BSH is a promising microbiome target for developing novel alternatives to antibiotic growth promoters (AGP) to enhance the productivity and sustainability of food animals.</text>
</comment>
<comment type="similarity">
    <text evidence="5">Belongs to the peptidase C59 family.</text>
</comment>
<keyword id="KW-0378">Hydrolase</keyword>
<keyword id="KW-0443">Lipid metabolism</keyword>